<keyword id="KW-0031">Aminopeptidase</keyword>
<keyword id="KW-0378">Hydrolase</keyword>
<keyword id="KW-0479">Metal-binding</keyword>
<keyword id="KW-0645">Protease</keyword>
<keyword id="KW-1185">Reference proteome</keyword>
<evidence type="ECO:0000255" key="1">
    <source>
        <dbReference type="HAMAP-Rule" id="MF_01974"/>
    </source>
</evidence>
<sequence length="268" mass="29896">MAIPIRTEKEIVKLREACKLASDVLVMIEPYVKAGVTTGELDRICHEYMVNEQKVIPACLNYHGFPKATCISINEVVCHGIPSDDKVLKNGDIVNIDVTVIKDGYFGDNSKMYIVGGETNIRSKKLVEAAQEALYVGIRTVKPDIRLNEIGKAVQKYTESQTFSVVREYCGHGVGTEFHCEPQVLHYYADDGGVILKPGMVFTIEPMINAGKKEVRVMGDGWTVKTKDRSHSAQYEHQLIVTETGCEVMTIRDEEIAEGRISRIMVNV</sequence>
<organism>
    <name type="scientific">Haemophilus influenzae (strain ATCC 51907 / DSM 11121 / KW20 / Rd)</name>
    <dbReference type="NCBI Taxonomy" id="71421"/>
    <lineage>
        <taxon>Bacteria</taxon>
        <taxon>Pseudomonadati</taxon>
        <taxon>Pseudomonadota</taxon>
        <taxon>Gammaproteobacteria</taxon>
        <taxon>Pasteurellales</taxon>
        <taxon>Pasteurellaceae</taxon>
        <taxon>Haemophilus</taxon>
    </lineage>
</organism>
<dbReference type="EC" id="3.4.11.18" evidence="1"/>
<dbReference type="EMBL" id="L42023">
    <property type="protein sequence ID" value="AAC23368.1"/>
    <property type="molecule type" value="Genomic_DNA"/>
</dbReference>
<dbReference type="PIR" id="C64138">
    <property type="entry name" value="C64138"/>
</dbReference>
<dbReference type="RefSeq" id="NP_439863.1">
    <property type="nucleotide sequence ID" value="NC_000907.1"/>
</dbReference>
<dbReference type="SMR" id="P44421"/>
<dbReference type="STRING" id="71421.HI_1722"/>
<dbReference type="MEROPS" id="M24.001"/>
<dbReference type="EnsemblBacteria" id="AAC23368">
    <property type="protein sequence ID" value="AAC23368"/>
    <property type="gene ID" value="HI_1722"/>
</dbReference>
<dbReference type="KEGG" id="hin:HI_1722"/>
<dbReference type="PATRIC" id="fig|71421.8.peg.1801"/>
<dbReference type="eggNOG" id="COG0024">
    <property type="taxonomic scope" value="Bacteria"/>
</dbReference>
<dbReference type="HOGENOM" id="CLU_015857_0_0_6"/>
<dbReference type="OrthoDB" id="9802055at2"/>
<dbReference type="PhylomeDB" id="P44421"/>
<dbReference type="BioCyc" id="HINF71421:G1GJ1-1737-MONOMER"/>
<dbReference type="Proteomes" id="UP000000579">
    <property type="component" value="Chromosome"/>
</dbReference>
<dbReference type="GO" id="GO:0005829">
    <property type="term" value="C:cytosol"/>
    <property type="evidence" value="ECO:0000318"/>
    <property type="project" value="GO_Central"/>
</dbReference>
<dbReference type="GO" id="GO:0004239">
    <property type="term" value="F:initiator methionyl aminopeptidase activity"/>
    <property type="evidence" value="ECO:0007669"/>
    <property type="project" value="UniProtKB-UniRule"/>
</dbReference>
<dbReference type="GO" id="GO:0046872">
    <property type="term" value="F:metal ion binding"/>
    <property type="evidence" value="ECO:0007669"/>
    <property type="project" value="UniProtKB-UniRule"/>
</dbReference>
<dbReference type="GO" id="GO:0070006">
    <property type="term" value="F:metalloaminopeptidase activity"/>
    <property type="evidence" value="ECO:0000318"/>
    <property type="project" value="GO_Central"/>
</dbReference>
<dbReference type="GO" id="GO:0006508">
    <property type="term" value="P:proteolysis"/>
    <property type="evidence" value="ECO:0007669"/>
    <property type="project" value="UniProtKB-KW"/>
</dbReference>
<dbReference type="CDD" id="cd01086">
    <property type="entry name" value="MetAP1"/>
    <property type="match status" value="1"/>
</dbReference>
<dbReference type="Gene3D" id="3.90.230.10">
    <property type="entry name" value="Creatinase/methionine aminopeptidase superfamily"/>
    <property type="match status" value="1"/>
</dbReference>
<dbReference type="HAMAP" id="MF_01974">
    <property type="entry name" value="MetAP_1"/>
    <property type="match status" value="1"/>
</dbReference>
<dbReference type="InterPro" id="IPR036005">
    <property type="entry name" value="Creatinase/aminopeptidase-like"/>
</dbReference>
<dbReference type="InterPro" id="IPR000994">
    <property type="entry name" value="Pept_M24"/>
</dbReference>
<dbReference type="InterPro" id="IPR001714">
    <property type="entry name" value="Pept_M24_MAP"/>
</dbReference>
<dbReference type="InterPro" id="IPR002467">
    <property type="entry name" value="Pept_M24A_MAP1"/>
</dbReference>
<dbReference type="NCBIfam" id="TIGR00500">
    <property type="entry name" value="met_pdase_I"/>
    <property type="match status" value="1"/>
</dbReference>
<dbReference type="PANTHER" id="PTHR43330">
    <property type="entry name" value="METHIONINE AMINOPEPTIDASE"/>
    <property type="match status" value="1"/>
</dbReference>
<dbReference type="PANTHER" id="PTHR43330:SF27">
    <property type="entry name" value="METHIONINE AMINOPEPTIDASE"/>
    <property type="match status" value="1"/>
</dbReference>
<dbReference type="Pfam" id="PF00557">
    <property type="entry name" value="Peptidase_M24"/>
    <property type="match status" value="1"/>
</dbReference>
<dbReference type="PRINTS" id="PR00599">
    <property type="entry name" value="MAPEPTIDASE"/>
</dbReference>
<dbReference type="SUPFAM" id="SSF55920">
    <property type="entry name" value="Creatinase/aminopeptidase"/>
    <property type="match status" value="1"/>
</dbReference>
<dbReference type="PROSITE" id="PS00680">
    <property type="entry name" value="MAP_1"/>
    <property type="match status" value="1"/>
</dbReference>
<name>MAP1_HAEIN</name>
<gene>
    <name evidence="1" type="primary">map</name>
    <name type="ordered locus">HI_1722</name>
</gene>
<protein>
    <recommendedName>
        <fullName evidence="1">Methionine aminopeptidase</fullName>
        <shortName evidence="1">MAP</shortName>
        <shortName evidence="1">MetAP</shortName>
        <ecNumber evidence="1">3.4.11.18</ecNumber>
    </recommendedName>
    <alternativeName>
        <fullName evidence="1">Peptidase M</fullName>
    </alternativeName>
</protein>
<accession>P44421</accession>
<comment type="function">
    <text evidence="1">Removes the N-terminal methionine from nascent proteins. The N-terminal methionine is often cleaved when the second residue in the primary sequence is small and uncharged (Met-Ala-, Cys, Gly, Pro, Ser, Thr, or Val). Requires deformylation of the N(alpha)-formylated initiator methionine before it can be hydrolyzed.</text>
</comment>
<comment type="catalytic activity">
    <reaction evidence="1">
        <text>Release of N-terminal amino acids, preferentially methionine, from peptides and arylamides.</text>
        <dbReference type="EC" id="3.4.11.18"/>
    </reaction>
</comment>
<comment type="cofactor">
    <cofactor evidence="1">
        <name>Co(2+)</name>
        <dbReference type="ChEBI" id="CHEBI:48828"/>
    </cofactor>
    <cofactor evidence="1">
        <name>Zn(2+)</name>
        <dbReference type="ChEBI" id="CHEBI:29105"/>
    </cofactor>
    <cofactor evidence="1">
        <name>Mn(2+)</name>
        <dbReference type="ChEBI" id="CHEBI:29035"/>
    </cofactor>
    <cofactor evidence="1">
        <name>Fe(2+)</name>
        <dbReference type="ChEBI" id="CHEBI:29033"/>
    </cofactor>
    <text evidence="1">Binds 2 divalent metal cations per subunit. Has a high-affinity and a low affinity metal-binding site. The true nature of the physiological cofactor is under debate. The enzyme is active with cobalt, zinc, manganese or divalent iron ions. Most likely, methionine aminopeptidases function as mononuclear Fe(2+)-metalloproteases under physiological conditions, and the catalytically relevant metal-binding site has been assigned to the histidine-containing high-affinity site.</text>
</comment>
<comment type="subunit">
    <text evidence="1">Monomer.</text>
</comment>
<comment type="similarity">
    <text evidence="1">Belongs to the peptidase M24A family. Methionine aminopeptidase type 1 subfamily.</text>
</comment>
<feature type="chain" id="PRO_0000148940" description="Methionine aminopeptidase">
    <location>
        <begin position="1"/>
        <end position="268"/>
    </location>
</feature>
<feature type="binding site" evidence="1">
    <location>
        <position position="79"/>
    </location>
    <ligand>
        <name>substrate</name>
    </ligand>
</feature>
<feature type="binding site" evidence="1">
    <location>
        <position position="97"/>
    </location>
    <ligand>
        <name>a divalent metal cation</name>
        <dbReference type="ChEBI" id="CHEBI:60240"/>
        <label>1</label>
    </ligand>
</feature>
<feature type="binding site" evidence="1">
    <location>
        <position position="108"/>
    </location>
    <ligand>
        <name>a divalent metal cation</name>
        <dbReference type="ChEBI" id="CHEBI:60240"/>
        <label>1</label>
    </ligand>
</feature>
<feature type="binding site" evidence="1">
    <location>
        <position position="108"/>
    </location>
    <ligand>
        <name>a divalent metal cation</name>
        <dbReference type="ChEBI" id="CHEBI:60240"/>
        <label>2</label>
        <note>catalytic</note>
    </ligand>
</feature>
<feature type="binding site" evidence="1">
    <location>
        <position position="172"/>
    </location>
    <ligand>
        <name>a divalent metal cation</name>
        <dbReference type="ChEBI" id="CHEBI:60240"/>
        <label>2</label>
        <note>catalytic</note>
    </ligand>
</feature>
<feature type="binding site" evidence="1">
    <location>
        <position position="179"/>
    </location>
    <ligand>
        <name>substrate</name>
    </ligand>
</feature>
<feature type="binding site" evidence="1">
    <location>
        <position position="205"/>
    </location>
    <ligand>
        <name>a divalent metal cation</name>
        <dbReference type="ChEBI" id="CHEBI:60240"/>
        <label>2</label>
        <note>catalytic</note>
    </ligand>
</feature>
<feature type="binding site" evidence="1">
    <location>
        <position position="236"/>
    </location>
    <ligand>
        <name>a divalent metal cation</name>
        <dbReference type="ChEBI" id="CHEBI:60240"/>
        <label>1</label>
    </ligand>
</feature>
<feature type="binding site" evidence="1">
    <location>
        <position position="236"/>
    </location>
    <ligand>
        <name>a divalent metal cation</name>
        <dbReference type="ChEBI" id="CHEBI:60240"/>
        <label>2</label>
        <note>catalytic</note>
    </ligand>
</feature>
<reference key="1">
    <citation type="journal article" date="1995" name="Science">
        <title>Whole-genome random sequencing and assembly of Haemophilus influenzae Rd.</title>
        <authorList>
            <person name="Fleischmann R.D."/>
            <person name="Adams M.D."/>
            <person name="White O."/>
            <person name="Clayton R.A."/>
            <person name="Kirkness E.F."/>
            <person name="Kerlavage A.R."/>
            <person name="Bult C.J."/>
            <person name="Tomb J.-F."/>
            <person name="Dougherty B.A."/>
            <person name="Merrick J.M."/>
            <person name="McKenney K."/>
            <person name="Sutton G.G."/>
            <person name="FitzHugh W."/>
            <person name="Fields C.A."/>
            <person name="Gocayne J.D."/>
            <person name="Scott J.D."/>
            <person name="Shirley R."/>
            <person name="Liu L.-I."/>
            <person name="Glodek A."/>
            <person name="Kelley J.M."/>
            <person name="Weidman J.F."/>
            <person name="Phillips C.A."/>
            <person name="Spriggs T."/>
            <person name="Hedblom E."/>
            <person name="Cotton M.D."/>
            <person name="Utterback T.R."/>
            <person name="Hanna M.C."/>
            <person name="Nguyen D.T."/>
            <person name="Saudek D.M."/>
            <person name="Brandon R.C."/>
            <person name="Fine L.D."/>
            <person name="Fritchman J.L."/>
            <person name="Fuhrmann J.L."/>
            <person name="Geoghagen N.S.M."/>
            <person name="Gnehm C.L."/>
            <person name="McDonald L.A."/>
            <person name="Small K.V."/>
            <person name="Fraser C.M."/>
            <person name="Smith H.O."/>
            <person name="Venter J.C."/>
        </authorList>
    </citation>
    <scope>NUCLEOTIDE SEQUENCE [LARGE SCALE GENOMIC DNA]</scope>
    <source>
        <strain>ATCC 51907 / DSM 11121 / KW20 / Rd</strain>
    </source>
</reference>
<proteinExistence type="inferred from homology"/>